<reference key="1">
    <citation type="journal article" date="2002" name="Proc. Natl. Acad. Sci. U.S.A.">
        <title>Genome sequence of a serotype M3 strain of group A Streptococcus: phage-encoded toxins, the high-virulence phenotype, and clone emergence.</title>
        <authorList>
            <person name="Beres S.B."/>
            <person name="Sylva G.L."/>
            <person name="Barbian K.D."/>
            <person name="Lei B."/>
            <person name="Hoff J.S."/>
            <person name="Mammarella N.D."/>
            <person name="Liu M.-Y."/>
            <person name="Smoot J.C."/>
            <person name="Porcella S.F."/>
            <person name="Parkins L.D."/>
            <person name="Campbell D.S."/>
            <person name="Smith T.M."/>
            <person name="McCormick J.K."/>
            <person name="Leung D.Y.M."/>
            <person name="Schlievert P.M."/>
            <person name="Musser J.M."/>
        </authorList>
    </citation>
    <scope>NUCLEOTIDE SEQUENCE [LARGE SCALE GENOMIC DNA]</scope>
    <source>
        <strain>ATCC BAA-595 / MGAS315</strain>
    </source>
</reference>
<protein>
    <recommendedName>
        <fullName evidence="1">Ribosome-recycling factor</fullName>
        <shortName evidence="1">RRF</shortName>
    </recommendedName>
    <alternativeName>
        <fullName evidence="1">Ribosome-releasing factor</fullName>
    </alternativeName>
</protein>
<accession>P0DF38</accession>
<accession>P68904</accession>
<accession>P82556</accession>
<comment type="function">
    <text evidence="1">Responsible for the release of ribosomes from messenger RNA at the termination of protein biosynthesis. May increase the efficiency of translation by recycling ribosomes from one round of translation to another.</text>
</comment>
<comment type="subcellular location">
    <subcellularLocation>
        <location evidence="1">Cytoplasm</location>
    </subcellularLocation>
</comment>
<comment type="similarity">
    <text evidence="1">Belongs to the RRF family.</text>
</comment>
<organism>
    <name type="scientific">Streptococcus pyogenes serotype M3 (strain ATCC BAA-595 / MGAS315)</name>
    <dbReference type="NCBI Taxonomy" id="198466"/>
    <lineage>
        <taxon>Bacteria</taxon>
        <taxon>Bacillati</taxon>
        <taxon>Bacillota</taxon>
        <taxon>Bacilli</taxon>
        <taxon>Lactobacillales</taxon>
        <taxon>Streptococcaceae</taxon>
        <taxon>Streptococcus</taxon>
    </lineage>
</organism>
<proteinExistence type="inferred from homology"/>
<sequence>MANAIIETAKERFAQSHQSLSREYASIRAGRANASLLDRIQVDYYGAPTPLNQLASITVPEARVLLISPFDKSSIKDIERALNASDLGITPANDGSVIRLVIPALTEETRKELAKEVKKVGENAKIAIRNIRRDAMDDAKKQEKAKEITEDELKTLEKDIQKATDDAIKEIDRMTAEKEKELLSV</sequence>
<evidence type="ECO:0000255" key="1">
    <source>
        <dbReference type="HAMAP-Rule" id="MF_00040"/>
    </source>
</evidence>
<dbReference type="EMBL" id="AE014074">
    <property type="protein sequence ID" value="AAM78934.1"/>
    <property type="molecule type" value="Genomic_DNA"/>
</dbReference>
<dbReference type="RefSeq" id="WP_002985763.1">
    <property type="nucleotide sequence ID" value="NC_004070.1"/>
</dbReference>
<dbReference type="SMR" id="P0DF38"/>
<dbReference type="GeneID" id="69901299"/>
<dbReference type="KEGG" id="spg:SpyM3_0327"/>
<dbReference type="HOGENOM" id="CLU_073981_2_0_9"/>
<dbReference type="Proteomes" id="UP000000564">
    <property type="component" value="Chromosome"/>
</dbReference>
<dbReference type="GO" id="GO:0005737">
    <property type="term" value="C:cytoplasm"/>
    <property type="evidence" value="ECO:0007669"/>
    <property type="project" value="UniProtKB-SubCell"/>
</dbReference>
<dbReference type="GO" id="GO:0043023">
    <property type="term" value="F:ribosomal large subunit binding"/>
    <property type="evidence" value="ECO:0007669"/>
    <property type="project" value="TreeGrafter"/>
</dbReference>
<dbReference type="GO" id="GO:0006415">
    <property type="term" value="P:translational termination"/>
    <property type="evidence" value="ECO:0007669"/>
    <property type="project" value="UniProtKB-UniRule"/>
</dbReference>
<dbReference type="CDD" id="cd00520">
    <property type="entry name" value="RRF"/>
    <property type="match status" value="1"/>
</dbReference>
<dbReference type="FunFam" id="1.10.132.20:FF:000001">
    <property type="entry name" value="Ribosome-recycling factor"/>
    <property type="match status" value="1"/>
</dbReference>
<dbReference type="FunFam" id="3.30.1360.40:FF:000001">
    <property type="entry name" value="Ribosome-recycling factor"/>
    <property type="match status" value="1"/>
</dbReference>
<dbReference type="Gene3D" id="3.30.1360.40">
    <property type="match status" value="1"/>
</dbReference>
<dbReference type="Gene3D" id="1.10.132.20">
    <property type="entry name" value="Ribosome-recycling factor"/>
    <property type="match status" value="1"/>
</dbReference>
<dbReference type="HAMAP" id="MF_00040">
    <property type="entry name" value="RRF"/>
    <property type="match status" value="1"/>
</dbReference>
<dbReference type="InterPro" id="IPR002661">
    <property type="entry name" value="Ribosome_recyc_fac"/>
</dbReference>
<dbReference type="InterPro" id="IPR023584">
    <property type="entry name" value="Ribosome_recyc_fac_dom"/>
</dbReference>
<dbReference type="InterPro" id="IPR036191">
    <property type="entry name" value="RRF_sf"/>
</dbReference>
<dbReference type="NCBIfam" id="TIGR00496">
    <property type="entry name" value="frr"/>
    <property type="match status" value="1"/>
</dbReference>
<dbReference type="PANTHER" id="PTHR20982:SF3">
    <property type="entry name" value="MITOCHONDRIAL RIBOSOME RECYCLING FACTOR PSEUDO 1"/>
    <property type="match status" value="1"/>
</dbReference>
<dbReference type="PANTHER" id="PTHR20982">
    <property type="entry name" value="RIBOSOME RECYCLING FACTOR"/>
    <property type="match status" value="1"/>
</dbReference>
<dbReference type="Pfam" id="PF01765">
    <property type="entry name" value="RRF"/>
    <property type="match status" value="1"/>
</dbReference>
<dbReference type="SUPFAM" id="SSF55194">
    <property type="entry name" value="Ribosome recycling factor, RRF"/>
    <property type="match status" value="1"/>
</dbReference>
<name>RRF_STRP3</name>
<keyword id="KW-0963">Cytoplasm</keyword>
<keyword id="KW-0648">Protein biosynthesis</keyword>
<gene>
    <name evidence="1" type="primary">frr</name>
    <name type="synonym">rrf</name>
    <name type="ordered locus">SpyM3_0327</name>
</gene>
<feature type="chain" id="PRO_0000167555" description="Ribosome-recycling factor">
    <location>
        <begin position="1"/>
        <end position="185"/>
    </location>
</feature>